<dbReference type="EC" id="2.4.2.29" evidence="1"/>
<dbReference type="EMBL" id="CP000350">
    <property type="protein sequence ID" value="ABJ75494.1"/>
    <property type="molecule type" value="Genomic_DNA"/>
</dbReference>
<dbReference type="RefSeq" id="WP_002750684.1">
    <property type="nucleotide sequence ID" value="NC_008510.1"/>
</dbReference>
<dbReference type="SMR" id="Q04UC6"/>
<dbReference type="KEGG" id="lbj:LBJ_0838"/>
<dbReference type="HOGENOM" id="CLU_022060_0_1_12"/>
<dbReference type="UniPathway" id="UPA00392"/>
<dbReference type="Proteomes" id="UP000000656">
    <property type="component" value="Chromosome 1"/>
</dbReference>
<dbReference type="GO" id="GO:0005829">
    <property type="term" value="C:cytosol"/>
    <property type="evidence" value="ECO:0007669"/>
    <property type="project" value="TreeGrafter"/>
</dbReference>
<dbReference type="GO" id="GO:0046872">
    <property type="term" value="F:metal ion binding"/>
    <property type="evidence" value="ECO:0007669"/>
    <property type="project" value="UniProtKB-KW"/>
</dbReference>
<dbReference type="GO" id="GO:0008479">
    <property type="term" value="F:tRNA-guanosine(34) queuine transglycosylase activity"/>
    <property type="evidence" value="ECO:0007669"/>
    <property type="project" value="UniProtKB-UniRule"/>
</dbReference>
<dbReference type="GO" id="GO:0008616">
    <property type="term" value="P:queuosine biosynthetic process"/>
    <property type="evidence" value="ECO:0007669"/>
    <property type="project" value="UniProtKB-UniRule"/>
</dbReference>
<dbReference type="GO" id="GO:0101030">
    <property type="term" value="P:tRNA-guanine transglycosylation"/>
    <property type="evidence" value="ECO:0007669"/>
    <property type="project" value="InterPro"/>
</dbReference>
<dbReference type="Gene3D" id="3.20.20.105">
    <property type="entry name" value="Queuine tRNA-ribosyltransferase-like"/>
    <property type="match status" value="1"/>
</dbReference>
<dbReference type="HAMAP" id="MF_00168">
    <property type="entry name" value="Q_tRNA_Tgt"/>
    <property type="match status" value="1"/>
</dbReference>
<dbReference type="InterPro" id="IPR004803">
    <property type="entry name" value="TGT"/>
</dbReference>
<dbReference type="InterPro" id="IPR036511">
    <property type="entry name" value="TGT-like_sf"/>
</dbReference>
<dbReference type="InterPro" id="IPR002616">
    <property type="entry name" value="tRNA_ribo_trans-like"/>
</dbReference>
<dbReference type="NCBIfam" id="TIGR00430">
    <property type="entry name" value="Q_tRNA_tgt"/>
    <property type="match status" value="1"/>
</dbReference>
<dbReference type="NCBIfam" id="TIGR00449">
    <property type="entry name" value="tgt_general"/>
    <property type="match status" value="1"/>
</dbReference>
<dbReference type="PANTHER" id="PTHR43530">
    <property type="entry name" value="QUEUINE TRNA-RIBOSYLTRANSFERASE CATALYTIC SUBUNIT 1"/>
    <property type="match status" value="1"/>
</dbReference>
<dbReference type="PANTHER" id="PTHR43530:SF1">
    <property type="entry name" value="QUEUINE TRNA-RIBOSYLTRANSFERASE CATALYTIC SUBUNIT 1"/>
    <property type="match status" value="1"/>
</dbReference>
<dbReference type="Pfam" id="PF01702">
    <property type="entry name" value="TGT"/>
    <property type="match status" value="1"/>
</dbReference>
<dbReference type="SUPFAM" id="SSF51713">
    <property type="entry name" value="tRNA-guanine transglycosylase"/>
    <property type="match status" value="1"/>
</dbReference>
<name>TGT_LEPBJ</name>
<gene>
    <name evidence="1" type="primary">tgt</name>
    <name type="ordered locus">LBJ_0838</name>
</gene>
<proteinExistence type="inferred from homology"/>
<sequence>MIFQTTSEDLRTRARTGILNLNGVKLETPVFMPVGTRGVVKTISADDLEELEYSLILGNTYHLYLRPGTAVLERFGGLKKFSTWKRALLTDSGGYQVFSLNSLFKYEQDGVRFQSHIDGSRHYFTPNSVIDIQRTIGSDIMMVLDDCAPFDSSQERLRQSLDRTHRWAEMSVEYWEKNKNSSHLFGIFQGGIDLGLRLESLQKIVSLPFDGIAIGGLSVGEPRKDFIRILEGVSAYTDRSRPLYLMGVGTVPDILDGVKNGVDMFDCVLPTRNARNGQVFTSLGKINLRNEKWKSSDVPIDPHCGCKVCKRYSIGYIRHLHHVGELTAFSLSTYHNLYFMKNFLSEIRKSIQAGEFLKIYAKWKNLYEKPEFSG</sequence>
<organism>
    <name type="scientific">Leptospira borgpetersenii serovar Hardjo-bovis (strain JB197)</name>
    <dbReference type="NCBI Taxonomy" id="355277"/>
    <lineage>
        <taxon>Bacteria</taxon>
        <taxon>Pseudomonadati</taxon>
        <taxon>Spirochaetota</taxon>
        <taxon>Spirochaetia</taxon>
        <taxon>Leptospirales</taxon>
        <taxon>Leptospiraceae</taxon>
        <taxon>Leptospira</taxon>
    </lineage>
</organism>
<reference key="1">
    <citation type="journal article" date="2006" name="Proc. Natl. Acad. Sci. U.S.A.">
        <title>Genome reduction in Leptospira borgpetersenii reflects limited transmission potential.</title>
        <authorList>
            <person name="Bulach D.M."/>
            <person name="Zuerner R.L."/>
            <person name="Wilson P."/>
            <person name="Seemann T."/>
            <person name="McGrath A."/>
            <person name="Cullen P.A."/>
            <person name="Davis J."/>
            <person name="Johnson M."/>
            <person name="Kuczek E."/>
            <person name="Alt D.P."/>
            <person name="Peterson-Burch B."/>
            <person name="Coppel R.L."/>
            <person name="Rood J.I."/>
            <person name="Davies J.K."/>
            <person name="Adler B."/>
        </authorList>
    </citation>
    <scope>NUCLEOTIDE SEQUENCE [LARGE SCALE GENOMIC DNA]</scope>
    <source>
        <strain>JB197</strain>
    </source>
</reference>
<comment type="function">
    <text evidence="1">Catalyzes the base-exchange of a guanine (G) residue with the queuine precursor 7-aminomethyl-7-deazaguanine (PreQ1) at position 34 (anticodon wobble position) in tRNAs with GU(N) anticodons (tRNA-Asp, -Asn, -His and -Tyr). Catalysis occurs through a double-displacement mechanism. The nucleophile active site attacks the C1' of nucleotide 34 to detach the guanine base from the RNA, forming a covalent enzyme-RNA intermediate. The proton acceptor active site deprotonates the incoming PreQ1, allowing a nucleophilic attack on the C1' of the ribose to form the product. After dissociation, two additional enzymatic reactions on the tRNA convert PreQ1 to queuine (Q), resulting in the hypermodified nucleoside queuosine (7-(((4,5-cis-dihydroxy-2-cyclopenten-1-yl)amino)methyl)-7-deazaguanosine).</text>
</comment>
<comment type="catalytic activity">
    <reaction evidence="1">
        <text>7-aminomethyl-7-carbaguanine + guanosine(34) in tRNA = 7-aminomethyl-7-carbaguanosine(34) in tRNA + guanine</text>
        <dbReference type="Rhea" id="RHEA:24104"/>
        <dbReference type="Rhea" id="RHEA-COMP:10341"/>
        <dbReference type="Rhea" id="RHEA-COMP:10342"/>
        <dbReference type="ChEBI" id="CHEBI:16235"/>
        <dbReference type="ChEBI" id="CHEBI:58703"/>
        <dbReference type="ChEBI" id="CHEBI:74269"/>
        <dbReference type="ChEBI" id="CHEBI:82833"/>
        <dbReference type="EC" id="2.4.2.29"/>
    </reaction>
</comment>
<comment type="cofactor">
    <cofactor evidence="1">
        <name>Zn(2+)</name>
        <dbReference type="ChEBI" id="CHEBI:29105"/>
    </cofactor>
    <text evidence="1">Binds 1 zinc ion per subunit.</text>
</comment>
<comment type="pathway">
    <text evidence="1">tRNA modification; tRNA-queuosine biosynthesis.</text>
</comment>
<comment type="subunit">
    <text evidence="1">Homodimer. Within each dimer, one monomer is responsible for RNA recognition and catalysis, while the other monomer binds to the replacement base PreQ1.</text>
</comment>
<comment type="similarity">
    <text evidence="1">Belongs to the queuine tRNA-ribosyltransferase family.</text>
</comment>
<keyword id="KW-0328">Glycosyltransferase</keyword>
<keyword id="KW-0479">Metal-binding</keyword>
<keyword id="KW-0671">Queuosine biosynthesis</keyword>
<keyword id="KW-0808">Transferase</keyword>
<keyword id="KW-0819">tRNA processing</keyword>
<keyword id="KW-0862">Zinc</keyword>
<evidence type="ECO:0000255" key="1">
    <source>
        <dbReference type="HAMAP-Rule" id="MF_00168"/>
    </source>
</evidence>
<feature type="chain" id="PRO_1000016811" description="Queuine tRNA-ribosyltransferase">
    <location>
        <begin position="1"/>
        <end position="374"/>
    </location>
</feature>
<feature type="region of interest" description="RNA binding" evidence="1">
    <location>
        <begin position="247"/>
        <end position="253"/>
    </location>
</feature>
<feature type="region of interest" description="RNA binding; important for wobble base 34 recognition" evidence="1">
    <location>
        <begin position="271"/>
        <end position="275"/>
    </location>
</feature>
<feature type="active site" description="Proton acceptor" evidence="1">
    <location>
        <position position="91"/>
    </location>
</feature>
<feature type="active site" description="Nucleophile" evidence="1">
    <location>
        <position position="266"/>
    </location>
</feature>
<feature type="binding site" evidence="1">
    <location>
        <begin position="91"/>
        <end position="95"/>
    </location>
    <ligand>
        <name>substrate</name>
    </ligand>
</feature>
<feature type="binding site" evidence="1">
    <location>
        <position position="145"/>
    </location>
    <ligand>
        <name>substrate</name>
    </ligand>
</feature>
<feature type="binding site" evidence="1">
    <location>
        <position position="189"/>
    </location>
    <ligand>
        <name>substrate</name>
    </ligand>
</feature>
<feature type="binding site" evidence="1">
    <location>
        <position position="216"/>
    </location>
    <ligand>
        <name>substrate</name>
    </ligand>
</feature>
<feature type="binding site" evidence="1">
    <location>
        <position position="304"/>
    </location>
    <ligand>
        <name>Zn(2+)</name>
        <dbReference type="ChEBI" id="CHEBI:29105"/>
    </ligand>
</feature>
<feature type="binding site" evidence="1">
    <location>
        <position position="306"/>
    </location>
    <ligand>
        <name>Zn(2+)</name>
        <dbReference type="ChEBI" id="CHEBI:29105"/>
    </ligand>
</feature>
<feature type="binding site" evidence="1">
    <location>
        <position position="309"/>
    </location>
    <ligand>
        <name>Zn(2+)</name>
        <dbReference type="ChEBI" id="CHEBI:29105"/>
    </ligand>
</feature>
<feature type="binding site" evidence="1">
    <location>
        <position position="335"/>
    </location>
    <ligand>
        <name>Zn(2+)</name>
        <dbReference type="ChEBI" id="CHEBI:29105"/>
    </ligand>
</feature>
<accession>Q04UC6</accession>
<protein>
    <recommendedName>
        <fullName evidence="1">Queuine tRNA-ribosyltransferase</fullName>
        <ecNumber evidence="1">2.4.2.29</ecNumber>
    </recommendedName>
    <alternativeName>
        <fullName evidence="1">Guanine insertion enzyme</fullName>
    </alternativeName>
    <alternativeName>
        <fullName evidence="1">tRNA-guanine transglycosylase</fullName>
    </alternativeName>
</protein>